<sequence>MNLAVAAALPSVTPRTGVVLPRSSRRHCPRGVVPRAASSSVSSFTSPSAAAAPIYTPTPQDRSLRTPHSGYHFDGTARPFFEGWYFKVSIPECRQSFCFMYSVENPLFRDGMSDLDKLLYRPRFTGVGAQILGADDKYICQFSEKSNNFWGSRHELMLGNTFISNKESTPPQGEVPPQDFSRRVLEGFQVTPIWHQGFIRDDGRSNYVPNVQTARWEYSTRPVYGWGDVKSKQLSTAGWLAAFPFFEPHWQICMASGLSTGWIEWDGERFEFENAPSYSEKNWGGGFPRKWYWIQCNVFPGASGEVSLTAAGGLRKIGLGDTYESPSLIGIHYEGQFFEFVPWTGTVSWDIGLWGLWKMSGENKTHLVEIEATTAESGTALRAPTIEAGLVPACKDTCYGDLRLQLWEKKYDGSKGEMILDATSNMAALEVGGGPWFNGWKGTTVVNEVVNNIVGTPVDVESLLPIPFLKPPGL</sequence>
<protein>
    <recommendedName>
        <fullName evidence="5">Tocopherol cyclase, chloroplastic</fullName>
        <ecNumber evidence="3">5.5.1.24</ecNumber>
    </recommendedName>
    <alternativeName>
        <fullName evidence="4">Sucrose export defective 1</fullName>
    </alternativeName>
</protein>
<feature type="transit peptide" description="Chloroplast" evidence="1">
    <location>
        <begin position="1"/>
        <end position="65"/>
    </location>
</feature>
<feature type="chain" id="PRO_0000022562" description="Tocopherol cyclase, chloroplastic">
    <location>
        <begin position="66"/>
        <end position="474"/>
    </location>
</feature>
<feature type="sequence conflict" description="In Ref. 1; AAK60502." ref="1">
    <original>F</original>
    <variation>L</variation>
    <location>
        <position position="188"/>
    </location>
</feature>
<feature type="sequence conflict" description="In Ref. 1; AAK60502." ref="1">
    <original>S</original>
    <variation>R</variation>
    <location>
        <position position="256"/>
    </location>
</feature>
<organism>
    <name type="scientific">Zea mays</name>
    <name type="common">Maize</name>
    <dbReference type="NCBI Taxonomy" id="4577"/>
    <lineage>
        <taxon>Eukaryota</taxon>
        <taxon>Viridiplantae</taxon>
        <taxon>Streptophyta</taxon>
        <taxon>Embryophyta</taxon>
        <taxon>Tracheophyta</taxon>
        <taxon>Spermatophyta</taxon>
        <taxon>Magnoliopsida</taxon>
        <taxon>Liliopsida</taxon>
        <taxon>Poales</taxon>
        <taxon>Poaceae</taxon>
        <taxon>PACMAD clade</taxon>
        <taxon>Panicoideae</taxon>
        <taxon>Andropogonodae</taxon>
        <taxon>Andropogoneae</taxon>
        <taxon>Tripsacinae</taxon>
        <taxon>Zea</taxon>
    </lineage>
</organism>
<accession>Q94FY8</accession>
<accession>C0HHY8</accession>
<dbReference type="EC" id="5.5.1.24" evidence="3"/>
<dbReference type="EMBL" id="AF302187">
    <property type="protein sequence ID" value="AAK60502.1"/>
    <property type="molecule type" value="mRNA"/>
</dbReference>
<dbReference type="EMBL" id="CM000781">
    <property type="protein sequence ID" value="AQK69856.1"/>
    <property type="molecule type" value="Genomic_DNA"/>
</dbReference>
<dbReference type="EMBL" id="BT061944">
    <property type="protein sequence ID" value="ACN26641.1"/>
    <property type="molecule type" value="mRNA"/>
</dbReference>
<dbReference type="RefSeq" id="NP_001105015.1">
    <property type="nucleotide sequence ID" value="NM_001111545.1"/>
</dbReference>
<dbReference type="FunCoup" id="Q94FY8">
    <property type="interactions" value="558"/>
</dbReference>
<dbReference type="STRING" id="4577.Q94FY8"/>
<dbReference type="SwissLipids" id="SLP:000001492"/>
<dbReference type="PaxDb" id="4577-GRMZM2G009785_P01"/>
<dbReference type="EnsemblPlants" id="Zm00001eb237270_T003">
    <property type="protein sequence ID" value="Zm00001eb237270_P003"/>
    <property type="gene ID" value="Zm00001eb237270"/>
</dbReference>
<dbReference type="GeneID" id="541877"/>
<dbReference type="Gramene" id="Zm00001eb237270_T003">
    <property type="protein sequence ID" value="Zm00001eb237270_P003"/>
    <property type="gene ID" value="Zm00001eb237270"/>
</dbReference>
<dbReference type="KEGG" id="zma:541877"/>
<dbReference type="MaizeGDB" id="60529"/>
<dbReference type="eggNOG" id="ENOG502QQ9P">
    <property type="taxonomic scope" value="Eukaryota"/>
</dbReference>
<dbReference type="InParanoid" id="Q94FY8"/>
<dbReference type="OMA" id="PHSGYHW"/>
<dbReference type="OrthoDB" id="38968at2759"/>
<dbReference type="BRENDA" id="5.5.1.24">
    <property type="organism ID" value="6752"/>
</dbReference>
<dbReference type="UniPathway" id="UPA00160"/>
<dbReference type="Proteomes" id="UP000007305">
    <property type="component" value="Chromosome 5"/>
</dbReference>
<dbReference type="ExpressionAtlas" id="Q94FY8">
    <property type="expression patterns" value="baseline and differential"/>
</dbReference>
<dbReference type="GO" id="GO:0010287">
    <property type="term" value="C:plastoglobule"/>
    <property type="evidence" value="ECO:0007669"/>
    <property type="project" value="EnsemblPlants"/>
</dbReference>
<dbReference type="GO" id="GO:0016853">
    <property type="term" value="F:isomerase activity"/>
    <property type="evidence" value="ECO:0007669"/>
    <property type="project" value="UniProtKB-KW"/>
</dbReference>
<dbReference type="GO" id="GO:0009976">
    <property type="term" value="F:tocopherol cyclase activity"/>
    <property type="evidence" value="ECO:0007669"/>
    <property type="project" value="UniProtKB-EC"/>
</dbReference>
<dbReference type="GO" id="GO:0015994">
    <property type="term" value="P:chlorophyll metabolic process"/>
    <property type="evidence" value="ECO:0007669"/>
    <property type="project" value="EnsemblPlants"/>
</dbReference>
<dbReference type="GO" id="GO:0006631">
    <property type="term" value="P:fatty acid metabolic process"/>
    <property type="evidence" value="ECO:0007669"/>
    <property type="project" value="EnsemblPlants"/>
</dbReference>
<dbReference type="GO" id="GO:0009915">
    <property type="term" value="P:phloem sucrose loading"/>
    <property type="evidence" value="ECO:0007669"/>
    <property type="project" value="EnsemblPlants"/>
</dbReference>
<dbReference type="GO" id="GO:0031347">
    <property type="term" value="P:regulation of defense response"/>
    <property type="evidence" value="ECO:0007669"/>
    <property type="project" value="EnsemblPlants"/>
</dbReference>
<dbReference type="GO" id="GO:0009644">
    <property type="term" value="P:response to high light intensity"/>
    <property type="evidence" value="ECO:0007669"/>
    <property type="project" value="EnsemblPlants"/>
</dbReference>
<dbReference type="GO" id="GO:0006979">
    <property type="term" value="P:response to oxidative stress"/>
    <property type="evidence" value="ECO:0007669"/>
    <property type="project" value="EnsemblPlants"/>
</dbReference>
<dbReference type="GO" id="GO:0009266">
    <property type="term" value="P:response to temperature stimulus"/>
    <property type="evidence" value="ECO:0007669"/>
    <property type="project" value="EnsemblPlants"/>
</dbReference>
<dbReference type="GO" id="GO:0010189">
    <property type="term" value="P:vitamin E biosynthetic process"/>
    <property type="evidence" value="ECO:0007669"/>
    <property type="project" value="UniProtKB-UniPathway"/>
</dbReference>
<dbReference type="GO" id="GO:0016122">
    <property type="term" value="P:xanthophyll metabolic process"/>
    <property type="evidence" value="ECO:0007669"/>
    <property type="project" value="EnsemblPlants"/>
</dbReference>
<dbReference type="InterPro" id="IPR025893">
    <property type="entry name" value="Tocopherol_cyclase"/>
</dbReference>
<dbReference type="PANTHER" id="PTHR35309">
    <property type="match status" value="1"/>
</dbReference>
<dbReference type="PANTHER" id="PTHR35309:SF2">
    <property type="entry name" value="TOCOPHEROL CYCLASE, CHLOROPLASTIC"/>
    <property type="match status" value="1"/>
</dbReference>
<dbReference type="Pfam" id="PF14249">
    <property type="entry name" value="Tocopherol_cycl"/>
    <property type="match status" value="1"/>
</dbReference>
<reference key="1">
    <citation type="journal article" date="2001" name="Plant Cell">
        <title>Sucrose export defective 1 encodes a novel protein implicated in chloroplast-to-nucleus signaling.</title>
        <authorList>
            <person name="Provencher L.M."/>
            <person name="Miao L."/>
            <person name="Sinha N."/>
            <person name="Lucas W.J."/>
        </authorList>
    </citation>
    <scope>NUCLEOTIDE SEQUENCE [MRNA]</scope>
    <scope>SUBCELLULAR LOCATION</scope>
    <scope>TISSUE SPECIFICITY</scope>
</reference>
<reference key="2">
    <citation type="journal article" date="2009" name="Science">
        <title>The B73 maize genome: complexity, diversity, and dynamics.</title>
        <authorList>
            <person name="Schnable P.S."/>
            <person name="Ware D."/>
            <person name="Fulton R.S."/>
            <person name="Stein J.C."/>
            <person name="Wei F."/>
            <person name="Pasternak S."/>
            <person name="Liang C."/>
            <person name="Zhang J."/>
            <person name="Fulton L."/>
            <person name="Graves T.A."/>
            <person name="Minx P."/>
            <person name="Reily A.D."/>
            <person name="Courtney L."/>
            <person name="Kruchowski S.S."/>
            <person name="Tomlinson C."/>
            <person name="Strong C."/>
            <person name="Delehaunty K."/>
            <person name="Fronick C."/>
            <person name="Courtney B."/>
            <person name="Rock S.M."/>
            <person name="Belter E."/>
            <person name="Du F."/>
            <person name="Kim K."/>
            <person name="Abbott R.M."/>
            <person name="Cotton M."/>
            <person name="Levy A."/>
            <person name="Marchetto P."/>
            <person name="Ochoa K."/>
            <person name="Jackson S.M."/>
            <person name="Gillam B."/>
            <person name="Chen W."/>
            <person name="Yan L."/>
            <person name="Higginbotham J."/>
            <person name="Cardenas M."/>
            <person name="Waligorski J."/>
            <person name="Applebaum E."/>
            <person name="Phelps L."/>
            <person name="Falcone J."/>
            <person name="Kanchi K."/>
            <person name="Thane T."/>
            <person name="Scimone A."/>
            <person name="Thane N."/>
            <person name="Henke J."/>
            <person name="Wang T."/>
            <person name="Ruppert J."/>
            <person name="Shah N."/>
            <person name="Rotter K."/>
            <person name="Hodges J."/>
            <person name="Ingenthron E."/>
            <person name="Cordes M."/>
            <person name="Kohlberg S."/>
            <person name="Sgro J."/>
            <person name="Delgado B."/>
            <person name="Mead K."/>
            <person name="Chinwalla A."/>
            <person name="Leonard S."/>
            <person name="Crouse K."/>
            <person name="Collura K."/>
            <person name="Kudrna D."/>
            <person name="Currie J."/>
            <person name="He R."/>
            <person name="Angelova A."/>
            <person name="Rajasekar S."/>
            <person name="Mueller T."/>
            <person name="Lomeli R."/>
            <person name="Scara G."/>
            <person name="Ko A."/>
            <person name="Delaney K."/>
            <person name="Wissotski M."/>
            <person name="Lopez G."/>
            <person name="Campos D."/>
            <person name="Braidotti M."/>
            <person name="Ashley E."/>
            <person name="Golser W."/>
            <person name="Kim H."/>
            <person name="Lee S."/>
            <person name="Lin J."/>
            <person name="Dujmic Z."/>
            <person name="Kim W."/>
            <person name="Talag J."/>
            <person name="Zuccolo A."/>
            <person name="Fan C."/>
            <person name="Sebastian A."/>
            <person name="Kramer M."/>
            <person name="Spiegel L."/>
            <person name="Nascimento L."/>
            <person name="Zutavern T."/>
            <person name="Miller B."/>
            <person name="Ambroise C."/>
            <person name="Muller S."/>
            <person name="Spooner W."/>
            <person name="Narechania A."/>
            <person name="Ren L."/>
            <person name="Wei S."/>
            <person name="Kumari S."/>
            <person name="Faga B."/>
            <person name="Levy M.J."/>
            <person name="McMahan L."/>
            <person name="Van Buren P."/>
            <person name="Vaughn M.W."/>
            <person name="Ying K."/>
            <person name="Yeh C.-T."/>
            <person name="Emrich S.J."/>
            <person name="Jia Y."/>
            <person name="Kalyanaraman A."/>
            <person name="Hsia A.-P."/>
            <person name="Barbazuk W.B."/>
            <person name="Baucom R.S."/>
            <person name="Brutnell T.P."/>
            <person name="Carpita N.C."/>
            <person name="Chaparro C."/>
            <person name="Chia J.-M."/>
            <person name="Deragon J.-M."/>
            <person name="Estill J.C."/>
            <person name="Fu Y."/>
            <person name="Jeddeloh J.A."/>
            <person name="Han Y."/>
            <person name="Lee H."/>
            <person name="Li P."/>
            <person name="Lisch D.R."/>
            <person name="Liu S."/>
            <person name="Liu Z."/>
            <person name="Nagel D.H."/>
            <person name="McCann M.C."/>
            <person name="SanMiguel P."/>
            <person name="Myers A.M."/>
            <person name="Nettleton D."/>
            <person name="Nguyen J."/>
            <person name="Penning B.W."/>
            <person name="Ponnala L."/>
            <person name="Schneider K.L."/>
            <person name="Schwartz D.C."/>
            <person name="Sharma A."/>
            <person name="Soderlund C."/>
            <person name="Springer N.M."/>
            <person name="Sun Q."/>
            <person name="Wang H."/>
            <person name="Waterman M."/>
            <person name="Westerman R."/>
            <person name="Wolfgruber T.K."/>
            <person name="Yang L."/>
            <person name="Yu Y."/>
            <person name="Zhang L."/>
            <person name="Zhou S."/>
            <person name="Zhu Q."/>
            <person name="Bennetzen J.L."/>
            <person name="Dawe R.K."/>
            <person name="Jiang J."/>
            <person name="Jiang N."/>
            <person name="Presting G.G."/>
            <person name="Wessler S.R."/>
            <person name="Aluru S."/>
            <person name="Martienssen R.A."/>
            <person name="Clifton S.W."/>
            <person name="McCombie W.R."/>
            <person name="Wing R.A."/>
            <person name="Wilson R.K."/>
        </authorList>
    </citation>
    <scope>NUCLEOTIDE SEQUENCE [LARGE SCALE GENOMIC DNA]</scope>
    <source>
        <strain>cv. B73</strain>
    </source>
</reference>
<reference key="3">
    <citation type="journal article" date="2009" name="PLoS Genet.">
        <title>Sequencing, mapping, and analysis of 27,455 maize full-length cDNAs.</title>
        <authorList>
            <person name="Soderlund C."/>
            <person name="Descour A."/>
            <person name="Kudrna D."/>
            <person name="Bomhoff M."/>
            <person name="Boyd L."/>
            <person name="Currie J."/>
            <person name="Angelova A."/>
            <person name="Collura K."/>
            <person name="Wissotski M."/>
            <person name="Ashley E."/>
            <person name="Morrow D."/>
            <person name="Fernandes J."/>
            <person name="Walbot V."/>
            <person name="Yu Y."/>
        </authorList>
    </citation>
    <scope>NUCLEOTIDE SEQUENCE [LARGE SCALE MRNA]</scope>
    <source>
        <strain>cv. B73</strain>
    </source>
</reference>
<reference key="4">
    <citation type="journal article" date="2003" name="Plant Physiol.">
        <title>Characterization of tocopherol cyclases from higher plants and cyanobacteria. Evolutionary implications for tocopherol synthesis and function.</title>
        <authorList>
            <person name="Sattler S.E."/>
            <person name="Cahoon E.B."/>
            <person name="Coughlan S.J."/>
            <person name="DellaPenna D."/>
        </authorList>
    </citation>
    <scope>FUNCTION</scope>
    <scope>CATALYTIC ACTIVITY</scope>
</reference>
<comment type="function">
    <text evidence="3 7">Involved in the synthesis of tocopherols (vitamin E), which presumably protect photosynthetic complexes from oxidative stress (Probable). Catalyzes the conversion of 2,3-dimethyl-5-phytyl-1,4-hydroquinone (DMPQ) to gamma-tocopherol (PubMed:12913173).</text>
</comment>
<comment type="catalytic activity">
    <reaction evidence="3">
        <text>gamma-tocopherol = 2,3-dimethyl-6-phytylbenzene-1,4-diol</text>
        <dbReference type="Rhea" id="RHEA:37983"/>
        <dbReference type="ChEBI" id="CHEBI:18185"/>
        <dbReference type="ChEBI" id="CHEBI:75921"/>
        <dbReference type="EC" id="5.5.1.24"/>
    </reaction>
    <physiologicalReaction direction="right-to-left" evidence="3">
        <dbReference type="Rhea" id="RHEA:37985"/>
    </physiologicalReaction>
</comment>
<comment type="pathway">
    <text evidence="6">Cofactor biosynthesis; tocopherol biosynthesis.</text>
</comment>
<comment type="subcellular location">
    <subcellularLocation>
        <location evidence="2">Plastid</location>
        <location evidence="2">Chloroplast</location>
    </subcellularLocation>
</comment>
<comment type="tissue specificity">
    <text evidence="2">Present in all green tissues, both in bundle sheath and in mesophyll cells.</text>
</comment>
<proteinExistence type="evidence at protein level"/>
<keyword id="KW-0150">Chloroplast</keyword>
<keyword id="KW-0413">Isomerase</keyword>
<keyword id="KW-0934">Plastid</keyword>
<keyword id="KW-1185">Reference proteome</keyword>
<keyword id="KW-0809">Transit peptide</keyword>
<evidence type="ECO:0000255" key="1"/>
<evidence type="ECO:0000269" key="2">
    <source>
    </source>
</evidence>
<evidence type="ECO:0000269" key="3">
    <source>
    </source>
</evidence>
<evidence type="ECO:0000303" key="4">
    <source>
    </source>
</evidence>
<evidence type="ECO:0000303" key="5">
    <source>
    </source>
</evidence>
<evidence type="ECO:0000305" key="6"/>
<evidence type="ECO:0000305" key="7">
    <source>
    </source>
</evidence>
<evidence type="ECO:0000312" key="8">
    <source>
        <dbReference type="EMBL" id="AQK69856.1"/>
    </source>
</evidence>
<name>TOCC_MAIZE</name>
<gene>
    <name evidence="4" type="primary">SXD1</name>
    <name evidence="8" type="ORF">ZEAMMB73_Zm00001d015985</name>
</gene>